<keyword id="KW-0002">3D-structure</keyword>
<keyword id="KW-0021">Allosteric enzyme</keyword>
<keyword id="KW-0120">Carbon dioxide fixation</keyword>
<keyword id="KW-0963">Cytoplasm</keyword>
<keyword id="KW-0456">Lyase</keyword>
<keyword id="KW-0460">Magnesium</keyword>
<keyword id="KW-0464">Manganese</keyword>
<keyword id="KW-0597">Phosphoprotein</keyword>
<keyword id="KW-0602">Photosynthesis</keyword>
<keyword id="KW-1185">Reference proteome</keyword>
<sequence>MANRKLEKMASIDVHLRQLVPGKVSEDDKLVEYDALLLDRFLDILQDLHGEDLRETVQELYEHSAEYEGKHEPKKLEELGSVLTSLDPGDSIVIAKAFSHMLNLANLAEEVQIAYRRRIKKLKKGDFVDESSATTESDLEETFKKLVGDLNKSPEEIFDALKNQTVDLVLTAHPTQSVRRSLLQKHGRIRDCLAQLYAKDITPDDKQELDEALQREIQAAFRTDEIKRTPPTPQDEMRAGMSYFHETIWKGVPKFLRRVDTALKNIGIEERVPYNAPLIQFSSWMGGDRDGNPRVTPEVTRDVCLLARMMAATMYFNQIEDLMFEMSMWRCNDELRARADEVHANSRKDAAKHYIEFWKSIPTTEPYRVILGDVRDKLYHTRERAHQLLSNGHSDVPVEATFINLEQFLEPLELCYRSLCSCGDRPIADGSLLDFLRQVSTFGLSLVRLDIRQESDRHTDVLDAITTHLDIGSYREWSEERRQEWLLSELSGKRPLFGSDLPKTEEIADVLDTFHVIAELPADSFGAYIISMATAPSDVLAVELLQRECRVKQPLRVVPLFEKLADLEAAPAAVARLFSVDWYKNRINGKQEVMIGYSDSGKDAGRLSAAWQLYKAQEELVKVAKEYGVKLTMFHGRGGTVGRGGGPTHLAILSQPPDTINGSLRVTVQGEVIEQSFGEEHLCFRTLQRFTAATLEHGMRPPISPKPEWRALLDEMAVVATEEYRSVVFQEPRFVEYFRLATPELEYGRMNIGSRPSKRKPSGGIESLRAIPWIFAWTQTRFHLPVWLGFGSAIRHVIEKDVRNLHMLQDMYQHWPFFRVTIDLIEMVFAKGDPGIAALYDKLLVSEELWPFGEKLRANFEETKKLILQTAGHKDLLEGDPYLKQRLRLRDSYITTLNVCQAYTLKRIRDPSYHVTLRPHISKEIAESSKPAKELIELNPTSEYAPGLEDTLILTMKGIAAGLQNTG</sequence>
<organism>
    <name type="scientific">Arabidopsis thaliana</name>
    <name type="common">Mouse-ear cress</name>
    <dbReference type="NCBI Taxonomy" id="3702"/>
    <lineage>
        <taxon>Eukaryota</taxon>
        <taxon>Viridiplantae</taxon>
        <taxon>Streptophyta</taxon>
        <taxon>Embryophyta</taxon>
        <taxon>Tracheophyta</taxon>
        <taxon>Spermatophyta</taxon>
        <taxon>Magnoliopsida</taxon>
        <taxon>eudicotyledons</taxon>
        <taxon>Gunneridae</taxon>
        <taxon>Pentapetalae</taxon>
        <taxon>rosids</taxon>
        <taxon>malvids</taxon>
        <taxon>Brassicales</taxon>
        <taxon>Brassicaceae</taxon>
        <taxon>Camelineae</taxon>
        <taxon>Arabidopsis</taxon>
    </lineage>
</organism>
<evidence type="ECO:0000250" key="1"/>
<evidence type="ECO:0000269" key="2">
    <source>
    </source>
</evidence>
<evidence type="ECO:0000269" key="3">
    <source>
    </source>
</evidence>
<evidence type="ECO:0000303" key="4">
    <source>
    </source>
</evidence>
<evidence type="ECO:0000305" key="5"/>
<evidence type="ECO:0000305" key="6">
    <source>
    </source>
</evidence>
<evidence type="ECO:0007744" key="7">
    <source>
    </source>
</evidence>
<evidence type="ECO:0007744" key="8">
    <source>
    </source>
</evidence>
<evidence type="ECO:0007744" key="9">
    <source>
    </source>
</evidence>
<evidence type="ECO:0007829" key="10">
    <source>
        <dbReference type="PDB" id="8CJ5"/>
    </source>
</evidence>
<evidence type="ECO:0007829" key="11">
    <source>
        <dbReference type="PDB" id="8CJ8"/>
    </source>
</evidence>
<evidence type="ECO:0007829" key="12">
    <source>
        <dbReference type="PDB" id="8OJ9"/>
    </source>
</evidence>
<evidence type="ECO:0007829" key="13">
    <source>
        <dbReference type="PDB" id="8OJE"/>
    </source>
</evidence>
<proteinExistence type="evidence at protein level"/>
<protein>
    <recommendedName>
        <fullName>Phosphoenolpyruvate carboxylase 1</fullName>
        <shortName evidence="4">AtPPC1</shortName>
        <shortName>PEPC 1</shortName>
        <shortName>PEPCase 1</shortName>
        <ecNumber evidence="3">4.1.1.31</ecNumber>
    </recommendedName>
    <alternativeName>
        <fullName>107-kDa PEPC polypeptide</fullName>
    </alternativeName>
</protein>
<dbReference type="EC" id="4.1.1.31" evidence="3"/>
<dbReference type="EMBL" id="AJ532901">
    <property type="protein sequence ID" value="CAD58725.1"/>
    <property type="molecule type" value="mRNA"/>
</dbReference>
<dbReference type="EMBL" id="AC008007">
    <property type="protein sequence ID" value="AAF69546.1"/>
    <property type="molecule type" value="Genomic_DNA"/>
</dbReference>
<dbReference type="EMBL" id="CP002684">
    <property type="protein sequence ID" value="AEE32921.1"/>
    <property type="molecule type" value="Genomic_DNA"/>
</dbReference>
<dbReference type="EMBL" id="CP002684">
    <property type="protein sequence ID" value="AEE32922.1"/>
    <property type="molecule type" value="Genomic_DNA"/>
</dbReference>
<dbReference type="EMBL" id="CP002684">
    <property type="protein sequence ID" value="AEE32923.1"/>
    <property type="molecule type" value="Genomic_DNA"/>
</dbReference>
<dbReference type="EMBL" id="AY057507">
    <property type="protein sequence ID" value="AAL09748.1"/>
    <property type="molecule type" value="mRNA"/>
</dbReference>
<dbReference type="EMBL" id="BT000647">
    <property type="protein sequence ID" value="AAN18213.1"/>
    <property type="molecule type" value="mRNA"/>
</dbReference>
<dbReference type="PIR" id="D96573">
    <property type="entry name" value="D96573"/>
</dbReference>
<dbReference type="RefSeq" id="NP_001031178.1">
    <property type="nucleotide sequence ID" value="NM_001036101.2"/>
</dbReference>
<dbReference type="RefSeq" id="NP_001031179.1">
    <property type="nucleotide sequence ID" value="NM_001036102.3"/>
</dbReference>
<dbReference type="RefSeq" id="NP_175738.1">
    <property type="nucleotide sequence ID" value="NM_104209.3"/>
</dbReference>
<dbReference type="PDB" id="8CJ5">
    <property type="method" value="X-ray"/>
    <property type="resolution" value="3.00 A"/>
    <property type="chains" value="A/B=1-967"/>
</dbReference>
<dbReference type="PDB" id="8CJ8">
    <property type="method" value="X-ray"/>
    <property type="resolution" value="3.49 A"/>
    <property type="chains" value="A/B/C=1-967"/>
</dbReference>
<dbReference type="PDB" id="8OJ9">
    <property type="method" value="X-ray"/>
    <property type="resolution" value="3.25 A"/>
    <property type="chains" value="A/B/C=1-967"/>
</dbReference>
<dbReference type="PDB" id="8OJE">
    <property type="method" value="X-ray"/>
    <property type="resolution" value="3.14 A"/>
    <property type="chains" value="A/B/C/D/E/F/G/H=1-967"/>
</dbReference>
<dbReference type="PDB" id="8OJF">
    <property type="method" value="X-ray"/>
    <property type="resolution" value="3.04 A"/>
    <property type="chains" value="A/B=1-967"/>
</dbReference>
<dbReference type="PDB" id="8OJQ">
    <property type="method" value="X-ray"/>
    <property type="resolution" value="3.05 A"/>
    <property type="chains" value="A/B=1-967"/>
</dbReference>
<dbReference type="PDB" id="8OJY">
    <property type="method" value="X-ray"/>
    <property type="resolution" value="3.10 A"/>
    <property type="chains" value="A/B/C=1-967"/>
</dbReference>
<dbReference type="PDB" id="8OJZ">
    <property type="method" value="X-ray"/>
    <property type="resolution" value="3.25 A"/>
    <property type="chains" value="A/B=1-967"/>
</dbReference>
<dbReference type="PDB" id="8QTM">
    <property type="method" value="X-ray"/>
    <property type="resolution" value="3.09 A"/>
    <property type="chains" value="A/B/C=1-967"/>
</dbReference>
<dbReference type="PDB" id="8QX1">
    <property type="method" value="X-ray"/>
    <property type="resolution" value="2.94 A"/>
    <property type="chains" value="A/B/C=1-967"/>
</dbReference>
<dbReference type="PDB" id="8QX3">
    <property type="method" value="X-ray"/>
    <property type="resolution" value="2.95 A"/>
    <property type="chains" value="A/B/C/D=1-967"/>
</dbReference>
<dbReference type="PDBsum" id="8CJ5"/>
<dbReference type="PDBsum" id="8CJ8"/>
<dbReference type="PDBsum" id="8OJ9"/>
<dbReference type="PDBsum" id="8OJE"/>
<dbReference type="PDBsum" id="8OJF"/>
<dbReference type="PDBsum" id="8OJQ"/>
<dbReference type="PDBsum" id="8OJY"/>
<dbReference type="PDBsum" id="8OJZ"/>
<dbReference type="PDBsum" id="8QTM"/>
<dbReference type="PDBsum" id="8QX1"/>
<dbReference type="PDBsum" id="8QX3"/>
<dbReference type="SMR" id="Q9MAH0"/>
<dbReference type="BioGRID" id="26990">
    <property type="interactions" value="12"/>
</dbReference>
<dbReference type="FunCoup" id="Q9MAH0">
    <property type="interactions" value="710"/>
</dbReference>
<dbReference type="IntAct" id="Q9MAH0">
    <property type="interactions" value="3"/>
</dbReference>
<dbReference type="STRING" id="3702.Q9MAH0"/>
<dbReference type="iPTMnet" id="Q9MAH0"/>
<dbReference type="MetOSite" id="Q9MAH0"/>
<dbReference type="PaxDb" id="3702-AT1G53310.3"/>
<dbReference type="ProteomicsDB" id="239179"/>
<dbReference type="EnsemblPlants" id="AT1G53310.1">
    <property type="protein sequence ID" value="AT1G53310.1"/>
    <property type="gene ID" value="AT1G53310"/>
</dbReference>
<dbReference type="EnsemblPlants" id="AT1G53310.2">
    <property type="protein sequence ID" value="AT1G53310.2"/>
    <property type="gene ID" value="AT1G53310"/>
</dbReference>
<dbReference type="EnsemblPlants" id="AT1G53310.3">
    <property type="protein sequence ID" value="AT1G53310.3"/>
    <property type="gene ID" value="AT1G53310"/>
</dbReference>
<dbReference type="GeneID" id="841765"/>
<dbReference type="Gramene" id="AT1G53310.1">
    <property type="protein sequence ID" value="AT1G53310.1"/>
    <property type="gene ID" value="AT1G53310"/>
</dbReference>
<dbReference type="Gramene" id="AT1G53310.2">
    <property type="protein sequence ID" value="AT1G53310.2"/>
    <property type="gene ID" value="AT1G53310"/>
</dbReference>
<dbReference type="Gramene" id="AT1G53310.3">
    <property type="protein sequence ID" value="AT1G53310.3"/>
    <property type="gene ID" value="AT1G53310"/>
</dbReference>
<dbReference type="KEGG" id="ath:AT1G53310"/>
<dbReference type="Araport" id="AT1G53310"/>
<dbReference type="TAIR" id="AT1G53310">
    <property type="gene designation" value="PPC1"/>
</dbReference>
<dbReference type="eggNOG" id="ENOG502QPVS">
    <property type="taxonomic scope" value="Eukaryota"/>
</dbReference>
<dbReference type="HOGENOM" id="CLU_006557_1_0_1"/>
<dbReference type="InParanoid" id="Q9MAH0"/>
<dbReference type="OMA" id="GPTHRFI"/>
<dbReference type="OrthoDB" id="1365747at2759"/>
<dbReference type="PhylomeDB" id="Q9MAH0"/>
<dbReference type="BRENDA" id="4.1.1.31">
    <property type="organism ID" value="399"/>
</dbReference>
<dbReference type="SABIO-RK" id="Q9MAH0"/>
<dbReference type="PRO" id="PR:Q9MAH0"/>
<dbReference type="Proteomes" id="UP000006548">
    <property type="component" value="Chromosome 1"/>
</dbReference>
<dbReference type="ExpressionAtlas" id="Q9MAH0">
    <property type="expression patterns" value="baseline and differential"/>
</dbReference>
<dbReference type="GO" id="GO:0048046">
    <property type="term" value="C:apoplast"/>
    <property type="evidence" value="ECO:0007005"/>
    <property type="project" value="TAIR"/>
</dbReference>
<dbReference type="GO" id="GO:0005829">
    <property type="term" value="C:cytosol"/>
    <property type="evidence" value="ECO:0007005"/>
    <property type="project" value="TAIR"/>
</dbReference>
<dbReference type="GO" id="GO:0005634">
    <property type="term" value="C:nucleus"/>
    <property type="evidence" value="ECO:0007005"/>
    <property type="project" value="TAIR"/>
</dbReference>
<dbReference type="GO" id="GO:0008964">
    <property type="term" value="F:phosphoenolpyruvate carboxylase activity"/>
    <property type="evidence" value="ECO:0000314"/>
    <property type="project" value="TAIR"/>
</dbReference>
<dbReference type="GO" id="GO:0015977">
    <property type="term" value="P:carbon fixation"/>
    <property type="evidence" value="ECO:0007669"/>
    <property type="project" value="UniProtKB-KW"/>
</dbReference>
<dbReference type="GO" id="GO:0016036">
    <property type="term" value="P:cellular response to phosphate starvation"/>
    <property type="evidence" value="ECO:0000314"/>
    <property type="project" value="UniProtKB"/>
</dbReference>
<dbReference type="GO" id="GO:0048366">
    <property type="term" value="P:leaf development"/>
    <property type="evidence" value="ECO:0000315"/>
    <property type="project" value="TAIR"/>
</dbReference>
<dbReference type="GO" id="GO:0015979">
    <property type="term" value="P:photosynthesis"/>
    <property type="evidence" value="ECO:0007669"/>
    <property type="project" value="UniProtKB-KW"/>
</dbReference>
<dbReference type="GO" id="GO:0051262">
    <property type="term" value="P:protein tetramerization"/>
    <property type="evidence" value="ECO:0000314"/>
    <property type="project" value="UniProtKB"/>
</dbReference>
<dbReference type="GO" id="GO:0006099">
    <property type="term" value="P:tricarboxylic acid cycle"/>
    <property type="evidence" value="ECO:0007669"/>
    <property type="project" value="InterPro"/>
</dbReference>
<dbReference type="FunFam" id="1.20.1440.90:FF:000001">
    <property type="entry name" value="Phosphoenolpyruvate carboxylase 1"/>
    <property type="match status" value="1"/>
</dbReference>
<dbReference type="Gene3D" id="1.20.1440.90">
    <property type="entry name" value="Phosphoenolpyruvate/pyruvate domain"/>
    <property type="match status" value="1"/>
</dbReference>
<dbReference type="HAMAP" id="MF_00595">
    <property type="entry name" value="PEPcase_type1"/>
    <property type="match status" value="1"/>
</dbReference>
<dbReference type="InterPro" id="IPR021135">
    <property type="entry name" value="PEP_COase"/>
</dbReference>
<dbReference type="InterPro" id="IPR022805">
    <property type="entry name" value="PEP_COase_bac/pln-type"/>
</dbReference>
<dbReference type="InterPro" id="IPR018129">
    <property type="entry name" value="PEP_COase_Lys_AS"/>
</dbReference>
<dbReference type="InterPro" id="IPR033129">
    <property type="entry name" value="PEPCASE_His_AS"/>
</dbReference>
<dbReference type="InterPro" id="IPR015813">
    <property type="entry name" value="Pyrv/PenolPyrv_kinase-like_dom"/>
</dbReference>
<dbReference type="NCBIfam" id="NF000584">
    <property type="entry name" value="PRK00009.1"/>
    <property type="match status" value="1"/>
</dbReference>
<dbReference type="PANTHER" id="PTHR30523">
    <property type="entry name" value="PHOSPHOENOLPYRUVATE CARBOXYLASE"/>
    <property type="match status" value="1"/>
</dbReference>
<dbReference type="PANTHER" id="PTHR30523:SF38">
    <property type="entry name" value="PHOSPHOENOLPYRUVATE CARBOXYLASE 1"/>
    <property type="match status" value="1"/>
</dbReference>
<dbReference type="Pfam" id="PF00311">
    <property type="entry name" value="PEPcase"/>
    <property type="match status" value="1"/>
</dbReference>
<dbReference type="PRINTS" id="PR00150">
    <property type="entry name" value="PEPCARBXLASE"/>
</dbReference>
<dbReference type="SUPFAM" id="SSF51621">
    <property type="entry name" value="Phosphoenolpyruvate/pyruvate domain"/>
    <property type="match status" value="1"/>
</dbReference>
<dbReference type="PROSITE" id="PS00781">
    <property type="entry name" value="PEPCASE_1"/>
    <property type="match status" value="1"/>
</dbReference>
<dbReference type="PROSITE" id="PS00393">
    <property type="entry name" value="PEPCASE_2"/>
    <property type="match status" value="1"/>
</dbReference>
<accession>Q9MAH0</accession>
<accession>Q546E4</accession>
<name>CAPP1_ARATH</name>
<reference key="1">
    <citation type="journal article" date="2003" name="Plant Physiol.">
        <title>Identification and expression analysis of a gene encoding a bacterial-type phosphoenolpyruvate carboxylase from Arabidopsis and rice.</title>
        <authorList>
            <person name="Sanchez R."/>
            <person name="Cejudo F.J."/>
        </authorList>
    </citation>
    <scope>NUCLEOTIDE SEQUENCE [MRNA]</scope>
    <scope>TISSUE SPECIFICITY</scope>
    <scope>NOMENCLATURE</scope>
    <source>
        <strain>cv. Columbia</strain>
    </source>
</reference>
<reference key="2">
    <citation type="journal article" date="2000" name="Nature">
        <title>Sequence and analysis of chromosome 1 of the plant Arabidopsis thaliana.</title>
        <authorList>
            <person name="Theologis A."/>
            <person name="Ecker J.R."/>
            <person name="Palm C.J."/>
            <person name="Federspiel N.A."/>
            <person name="Kaul S."/>
            <person name="White O."/>
            <person name="Alonso J."/>
            <person name="Altafi H."/>
            <person name="Araujo R."/>
            <person name="Bowman C.L."/>
            <person name="Brooks S.Y."/>
            <person name="Buehler E."/>
            <person name="Chan A."/>
            <person name="Chao Q."/>
            <person name="Chen H."/>
            <person name="Cheuk R.F."/>
            <person name="Chin C.W."/>
            <person name="Chung M.K."/>
            <person name="Conn L."/>
            <person name="Conway A.B."/>
            <person name="Conway A.R."/>
            <person name="Creasy T.H."/>
            <person name="Dewar K."/>
            <person name="Dunn P."/>
            <person name="Etgu P."/>
            <person name="Feldblyum T.V."/>
            <person name="Feng J.-D."/>
            <person name="Fong B."/>
            <person name="Fujii C.Y."/>
            <person name="Gill J.E."/>
            <person name="Goldsmith A.D."/>
            <person name="Haas B."/>
            <person name="Hansen N.F."/>
            <person name="Hughes B."/>
            <person name="Huizar L."/>
            <person name="Hunter J.L."/>
            <person name="Jenkins J."/>
            <person name="Johnson-Hopson C."/>
            <person name="Khan S."/>
            <person name="Khaykin E."/>
            <person name="Kim C.J."/>
            <person name="Koo H.L."/>
            <person name="Kremenetskaia I."/>
            <person name="Kurtz D.B."/>
            <person name="Kwan A."/>
            <person name="Lam B."/>
            <person name="Langin-Hooper S."/>
            <person name="Lee A."/>
            <person name="Lee J.M."/>
            <person name="Lenz C.A."/>
            <person name="Li J.H."/>
            <person name="Li Y.-P."/>
            <person name="Lin X."/>
            <person name="Liu S.X."/>
            <person name="Liu Z.A."/>
            <person name="Luros J.S."/>
            <person name="Maiti R."/>
            <person name="Marziali A."/>
            <person name="Militscher J."/>
            <person name="Miranda M."/>
            <person name="Nguyen M."/>
            <person name="Nierman W.C."/>
            <person name="Osborne B.I."/>
            <person name="Pai G."/>
            <person name="Peterson J."/>
            <person name="Pham P.K."/>
            <person name="Rizzo M."/>
            <person name="Rooney T."/>
            <person name="Rowley D."/>
            <person name="Sakano H."/>
            <person name="Salzberg S.L."/>
            <person name="Schwartz J.R."/>
            <person name="Shinn P."/>
            <person name="Southwick A.M."/>
            <person name="Sun H."/>
            <person name="Tallon L.J."/>
            <person name="Tambunga G."/>
            <person name="Toriumi M.J."/>
            <person name="Town C.D."/>
            <person name="Utterback T."/>
            <person name="Van Aken S."/>
            <person name="Vaysberg M."/>
            <person name="Vysotskaia V.S."/>
            <person name="Walker M."/>
            <person name="Wu D."/>
            <person name="Yu G."/>
            <person name="Fraser C.M."/>
            <person name="Venter J.C."/>
            <person name="Davis R.W."/>
        </authorList>
    </citation>
    <scope>NUCLEOTIDE SEQUENCE [LARGE SCALE GENOMIC DNA]</scope>
    <source>
        <strain>cv. Columbia</strain>
    </source>
</reference>
<reference key="3">
    <citation type="journal article" date="2017" name="Plant J.">
        <title>Araport11: a complete reannotation of the Arabidopsis thaliana reference genome.</title>
        <authorList>
            <person name="Cheng C.Y."/>
            <person name="Krishnakumar V."/>
            <person name="Chan A.P."/>
            <person name="Thibaud-Nissen F."/>
            <person name="Schobel S."/>
            <person name="Town C.D."/>
        </authorList>
    </citation>
    <scope>GENOME REANNOTATION</scope>
    <source>
        <strain>cv. Columbia</strain>
    </source>
</reference>
<reference key="4">
    <citation type="journal article" date="2003" name="Science">
        <title>Empirical analysis of transcriptional activity in the Arabidopsis genome.</title>
        <authorList>
            <person name="Yamada K."/>
            <person name="Lim J."/>
            <person name="Dale J.M."/>
            <person name="Chen H."/>
            <person name="Shinn P."/>
            <person name="Palm C.J."/>
            <person name="Southwick A.M."/>
            <person name="Wu H.C."/>
            <person name="Kim C.J."/>
            <person name="Nguyen M."/>
            <person name="Pham P.K."/>
            <person name="Cheuk R.F."/>
            <person name="Karlin-Newmann G."/>
            <person name="Liu S.X."/>
            <person name="Lam B."/>
            <person name="Sakano H."/>
            <person name="Wu T."/>
            <person name="Yu G."/>
            <person name="Miranda M."/>
            <person name="Quach H.L."/>
            <person name="Tripp M."/>
            <person name="Chang C.H."/>
            <person name="Lee J.M."/>
            <person name="Toriumi M.J."/>
            <person name="Chan M.M."/>
            <person name="Tang C.C."/>
            <person name="Onodera C.S."/>
            <person name="Deng J.M."/>
            <person name="Akiyama K."/>
            <person name="Ansari Y."/>
            <person name="Arakawa T."/>
            <person name="Banh J."/>
            <person name="Banno F."/>
            <person name="Bowser L."/>
            <person name="Brooks S.Y."/>
            <person name="Carninci P."/>
            <person name="Chao Q."/>
            <person name="Choy N."/>
            <person name="Enju A."/>
            <person name="Goldsmith A.D."/>
            <person name="Gurjal M."/>
            <person name="Hansen N.F."/>
            <person name="Hayashizaki Y."/>
            <person name="Johnson-Hopson C."/>
            <person name="Hsuan V.W."/>
            <person name="Iida K."/>
            <person name="Karnes M."/>
            <person name="Khan S."/>
            <person name="Koesema E."/>
            <person name="Ishida J."/>
            <person name="Jiang P.X."/>
            <person name="Jones T."/>
            <person name="Kawai J."/>
            <person name="Kamiya A."/>
            <person name="Meyers C."/>
            <person name="Nakajima M."/>
            <person name="Narusaka M."/>
            <person name="Seki M."/>
            <person name="Sakurai T."/>
            <person name="Satou M."/>
            <person name="Tamse R."/>
            <person name="Vaysberg M."/>
            <person name="Wallender E.K."/>
            <person name="Wong C."/>
            <person name="Yamamura Y."/>
            <person name="Yuan S."/>
            <person name="Shinozaki K."/>
            <person name="Davis R.W."/>
            <person name="Theologis A."/>
            <person name="Ecker J.R."/>
        </authorList>
    </citation>
    <scope>NUCLEOTIDE SEQUENCE [LARGE SCALE MRNA]</scope>
    <source>
        <strain>cv. Columbia</strain>
    </source>
</reference>
<reference key="5">
    <citation type="journal article" date="2008" name="J. Proteome Res.">
        <title>Site-specific phosphorylation profiling of Arabidopsis proteins by mass spectrometry and peptide chip analysis.</title>
        <authorList>
            <person name="de la Fuente van Bentem S."/>
            <person name="Anrather D."/>
            <person name="Dohnal I."/>
            <person name="Roitinger E."/>
            <person name="Csaszar E."/>
            <person name="Joore J."/>
            <person name="Buijnink J."/>
            <person name="Carreri A."/>
            <person name="Forzani C."/>
            <person name="Lorkovic Z.J."/>
            <person name="Barta A."/>
            <person name="Lecourieux D."/>
            <person name="Verhounig A."/>
            <person name="Jonak C."/>
            <person name="Hirt H."/>
        </authorList>
    </citation>
    <scope>PHOSPHORYLATION [LARGE SCALE ANALYSIS] AT SER-11 AND SER-704</scope>
    <scope>IDENTIFICATION BY MASS SPECTROMETRY [LARGE SCALE ANALYSIS]</scope>
    <source>
        <tissue>Root</tissue>
    </source>
</reference>
<reference key="6">
    <citation type="journal article" date="2009" name="Biochem. J.">
        <title>In vivo regulatory phosphorylation of the phosphoenolpyruvate carboxylase AtPPC1 in phosphate-starved Arabidopsis thaliana.</title>
        <authorList>
            <person name="Gregory A.L."/>
            <person name="Hurley B.A."/>
            <person name="Tran H.T."/>
            <person name="Valentine A.J."/>
            <person name="She Y.-M."/>
            <person name="Knowles V.L."/>
            <person name="Plaxton W.C."/>
        </authorList>
    </citation>
    <scope>FUNCTION</scope>
    <scope>CATALYTIC ACTIVITY</scope>
    <scope>PHOSPHORYLATION AT SER-11</scope>
    <scope>INDUCTION BY PHOSPHATE DEPRIVATION</scope>
    <scope>ACTIVITY REGULATION</scope>
    <scope>SUBUNIT</scope>
    <scope>TISSUE SPECIFICITY</scope>
    <scope>IDENTIFICATION BY MASS SPECTROMETRY</scope>
    <scope>BIOPHYSICOCHEMICAL PROPERTIES</scope>
    <scope>COFACTOR</scope>
    <source>
        <strain>cv. Columbia</strain>
        <strain>cv. Landsberg erecta</strain>
    </source>
</reference>
<reference key="7">
    <citation type="journal article" date="2009" name="J. Proteomics">
        <title>Phosphoproteomic analysis of nuclei-enriched fractions from Arabidopsis thaliana.</title>
        <authorList>
            <person name="Jones A.M.E."/>
            <person name="MacLean D."/>
            <person name="Studholme D.J."/>
            <person name="Serna-Sanz A."/>
            <person name="Andreasson E."/>
            <person name="Rathjen J.P."/>
            <person name="Peck S.C."/>
        </authorList>
    </citation>
    <scope>PHOSPHORYLATION [LARGE SCALE ANALYSIS] AT SER-11</scope>
    <scope>IDENTIFICATION BY MASS SPECTROMETRY [LARGE SCALE ANALYSIS]</scope>
    <source>
        <strain>cv. Columbia</strain>
    </source>
</reference>
<reference key="8">
    <citation type="journal article" date="2009" name="Plant Physiol.">
        <title>Large-scale Arabidopsis phosphoproteome profiling reveals novel chloroplast kinase substrates and phosphorylation networks.</title>
        <authorList>
            <person name="Reiland S."/>
            <person name="Messerli G."/>
            <person name="Baerenfaller K."/>
            <person name="Gerrits B."/>
            <person name="Endler A."/>
            <person name="Grossmann J."/>
            <person name="Gruissem W."/>
            <person name="Baginsky S."/>
        </authorList>
    </citation>
    <scope>PHOSPHORYLATION [LARGE SCALE ANALYSIS] AT SER-11</scope>
    <scope>IDENTIFICATION BY MASS SPECTROMETRY [LARGE SCALE ANALYSIS]</scope>
</reference>
<comment type="function">
    <text evidence="3">Through the carboxylation of phosphoenolpyruvate (PEP) it forms oxaloacetate, a four-carbon dicarboxylic acid source for the tricarboxylic acid cycle. Contributes probably to the adaptation to inorganic phosphate (Pi) deprivation.</text>
</comment>
<comment type="catalytic activity">
    <reaction evidence="3">
        <text>oxaloacetate + phosphate = phosphoenolpyruvate + hydrogencarbonate</text>
        <dbReference type="Rhea" id="RHEA:28370"/>
        <dbReference type="ChEBI" id="CHEBI:16452"/>
        <dbReference type="ChEBI" id="CHEBI:17544"/>
        <dbReference type="ChEBI" id="CHEBI:43474"/>
        <dbReference type="ChEBI" id="CHEBI:58702"/>
        <dbReference type="EC" id="4.1.1.31"/>
    </reaction>
    <physiologicalReaction direction="right-to-left" evidence="6">
        <dbReference type="Rhea" id="RHEA:28372"/>
    </physiologicalReaction>
</comment>
<comment type="cofactor">
    <cofactor evidence="3">
        <name>Mg(2+)</name>
        <dbReference type="ChEBI" id="CHEBI:18420"/>
    </cofactor>
    <cofactor evidence="3">
        <name>Mn(2+)</name>
        <dbReference type="ChEBI" id="CHEBI:29035"/>
    </cofactor>
    <text evidence="3">Magnesium. Can also use manganese.</text>
</comment>
<comment type="activity regulation">
    <text evidence="1 3">By light-reversible phosphorylation (By similarity). Activated by inorganic phosphate (Pi) deprivation and glucose 6-phosphate. Inhibited by L-malate and L-aspartate.</text>
</comment>
<comment type="biophysicochemical properties">
    <kinetics>
        <KM evidence="3">0.18 mM for PEP (Phospho-PPC1 at pH 7.3 and 25 degrees Celsius)</KM>
        <KM evidence="3">0.34 mM for PEP (Dephospho-PPC1 at pH 7.3 and 25 degrees Celsius)</KM>
    </kinetics>
    <phDependence>
        <text evidence="3">Optimum pH is 8-9.</text>
    </phDependence>
</comment>
<comment type="subunit">
    <text evidence="3">Homotetramer.</text>
</comment>
<comment type="subcellular location">
    <subcellularLocation>
        <location evidence="1">Cytoplasm</location>
    </subcellularLocation>
</comment>
<comment type="tissue specificity">
    <text evidence="2 3">Expressed in all plant organs, with higher levels in roots.</text>
</comment>
<comment type="induction">
    <text evidence="3">Upon inorganic phosphate (Pi) deprivation.</text>
</comment>
<comment type="PTM">
    <text evidence="3">The phosphorylation of Ser-11 is reversibly promoted by inorganic phosphate (Pi) deprivation. Enhanced activity by phosphorylation at pH 7.3 by lowering Km and sensitivity to inhibition by L-malate and L-aspartate, while enhancing activation by glucose 6-phosphate.</text>
</comment>
<comment type="similarity">
    <text evidence="5">Belongs to the PEPCase type 1 family.</text>
</comment>
<feature type="chain" id="PRO_0000166657" description="Phosphoenolpyruvate carboxylase 1">
    <location>
        <begin position="1"/>
        <end position="967"/>
    </location>
</feature>
<feature type="active site" evidence="1">
    <location>
        <position position="173"/>
    </location>
</feature>
<feature type="active site" evidence="1">
    <location>
        <position position="602"/>
    </location>
</feature>
<feature type="modified residue" description="Phosphoserine" evidence="3 7 8 9">
    <location>
        <position position="11"/>
    </location>
</feature>
<feature type="modified residue" description="Phosphoserine" evidence="7">
    <location>
        <position position="704"/>
    </location>
</feature>
<feature type="helix" evidence="13">
    <location>
        <begin position="9"/>
        <end position="19"/>
    </location>
</feature>
<feature type="strand" evidence="13">
    <location>
        <begin position="24"/>
        <end position="27"/>
    </location>
</feature>
<feature type="helix" evidence="10">
    <location>
        <begin position="30"/>
        <end position="49"/>
    </location>
</feature>
<feature type="helix" evidence="10">
    <location>
        <begin position="51"/>
        <end position="70"/>
    </location>
</feature>
<feature type="helix" evidence="10">
    <location>
        <begin position="74"/>
        <end position="83"/>
    </location>
</feature>
<feature type="helix" evidence="10">
    <location>
        <begin position="88"/>
        <end position="118"/>
    </location>
</feature>
<feature type="helix" evidence="13">
    <location>
        <begin position="120"/>
        <end position="122"/>
    </location>
</feature>
<feature type="helix" evidence="13">
    <location>
        <begin position="127"/>
        <end position="131"/>
    </location>
</feature>
<feature type="turn" evidence="13">
    <location>
        <begin position="133"/>
        <end position="135"/>
    </location>
</feature>
<feature type="helix" evidence="10">
    <location>
        <begin position="139"/>
        <end position="148"/>
    </location>
</feature>
<feature type="helix" evidence="10">
    <location>
        <begin position="154"/>
        <end position="162"/>
    </location>
</feature>
<feature type="strand" evidence="10">
    <location>
        <begin position="165"/>
        <end position="171"/>
    </location>
</feature>
<feature type="helix" evidence="10">
    <location>
        <begin position="180"/>
        <end position="196"/>
    </location>
</feature>
<feature type="strand" evidence="10">
    <location>
        <begin position="197"/>
        <end position="199"/>
    </location>
</feature>
<feature type="helix" evidence="10">
    <location>
        <begin position="203"/>
        <end position="221"/>
    </location>
</feature>
<feature type="helix" evidence="10">
    <location>
        <begin position="233"/>
        <end position="241"/>
    </location>
</feature>
<feature type="turn" evidence="10">
    <location>
        <begin position="242"/>
        <end position="247"/>
    </location>
</feature>
<feature type="helix" evidence="10">
    <location>
        <begin position="248"/>
        <end position="265"/>
    </location>
</feature>
<feature type="strand" evidence="10">
    <location>
        <begin position="278"/>
        <end position="283"/>
    </location>
</feature>
<feature type="turn" evidence="10">
    <location>
        <begin position="285"/>
        <end position="287"/>
    </location>
</feature>
<feature type="helix" evidence="10">
    <location>
        <begin position="297"/>
        <end position="325"/>
    </location>
</feature>
<feature type="helix" evidence="10">
    <location>
        <begin position="333"/>
        <end position="344"/>
    </location>
</feature>
<feature type="strand" evidence="10">
    <location>
        <begin position="355"/>
        <end position="357"/>
    </location>
</feature>
<feature type="helix" evidence="10">
    <location>
        <begin position="366"/>
        <end position="390"/>
    </location>
</feature>
<feature type="helix" evidence="10">
    <location>
        <begin position="398"/>
        <end position="400"/>
    </location>
</feature>
<feature type="turn" evidence="10">
    <location>
        <begin position="405"/>
        <end position="408"/>
    </location>
</feature>
<feature type="helix" evidence="10">
    <location>
        <begin position="409"/>
        <end position="421"/>
    </location>
</feature>
<feature type="helix" evidence="10">
    <location>
        <begin position="425"/>
        <end position="428"/>
    </location>
</feature>
<feature type="helix" evidence="10">
    <location>
        <begin position="431"/>
        <end position="442"/>
    </location>
</feature>
<feature type="strand" evidence="10">
    <location>
        <begin position="445"/>
        <end position="454"/>
    </location>
</feature>
<feature type="helix" evidence="10">
    <location>
        <begin position="455"/>
        <end position="468"/>
    </location>
</feature>
<feature type="turn" evidence="10">
    <location>
        <begin position="474"/>
        <end position="476"/>
    </location>
</feature>
<feature type="helix" evidence="10">
    <location>
        <begin position="479"/>
        <end position="491"/>
    </location>
</feature>
<feature type="strand" evidence="12">
    <location>
        <begin position="492"/>
        <end position="494"/>
    </location>
</feature>
<feature type="strand" evidence="13">
    <location>
        <begin position="499"/>
        <end position="501"/>
    </location>
</feature>
<feature type="helix" evidence="10">
    <location>
        <begin position="505"/>
        <end position="519"/>
    </location>
</feature>
<feature type="helix" evidence="10">
    <location>
        <begin position="522"/>
        <end position="524"/>
    </location>
</feature>
<feature type="strand" evidence="10">
    <location>
        <begin position="525"/>
        <end position="532"/>
    </location>
</feature>
<feature type="helix" evidence="10">
    <location>
        <begin position="536"/>
        <end position="548"/>
    </location>
</feature>
<feature type="strand" evidence="10">
    <location>
        <begin position="556"/>
        <end position="561"/>
    </location>
</feature>
<feature type="helix" evidence="10">
    <location>
        <begin position="564"/>
        <end position="579"/>
    </location>
</feature>
<feature type="helix" evidence="10">
    <location>
        <begin position="581"/>
        <end position="586"/>
    </location>
</feature>
<feature type="turn" evidence="10">
    <location>
        <begin position="587"/>
        <end position="589"/>
    </location>
</feature>
<feature type="strand" evidence="10">
    <location>
        <begin position="590"/>
        <end position="596"/>
    </location>
</feature>
<feature type="helix" evidence="10">
    <location>
        <begin position="600"/>
        <end position="603"/>
    </location>
</feature>
<feature type="helix" evidence="10">
    <location>
        <begin position="606"/>
        <end position="626"/>
    </location>
</feature>
<feature type="strand" evidence="10">
    <location>
        <begin position="630"/>
        <end position="636"/>
    </location>
</feature>
<feature type="strand" evidence="11">
    <location>
        <begin position="637"/>
        <end position="639"/>
    </location>
</feature>
<feature type="helix" evidence="10">
    <location>
        <begin position="641"/>
        <end position="643"/>
    </location>
</feature>
<feature type="helix" evidence="10">
    <location>
        <begin position="648"/>
        <end position="653"/>
    </location>
</feature>
<feature type="strand" evidence="10">
    <location>
        <begin position="661"/>
        <end position="669"/>
    </location>
</feature>
<feature type="helix" evidence="10">
    <location>
        <begin position="671"/>
        <end position="677"/>
    </location>
</feature>
<feature type="helix" evidence="10">
    <location>
        <begin position="680"/>
        <end position="699"/>
    </location>
</feature>
<feature type="helix" evidence="10">
    <location>
        <begin position="707"/>
        <end position="728"/>
    </location>
</feature>
<feature type="helix" evidence="10">
    <location>
        <begin position="734"/>
        <end position="741"/>
    </location>
</feature>
<feature type="helix" evidence="10">
    <location>
        <begin position="744"/>
        <end position="750"/>
    </location>
</feature>
<feature type="strand" evidence="11">
    <location>
        <begin position="753"/>
        <end position="755"/>
    </location>
</feature>
<feature type="strand" evidence="13">
    <location>
        <begin position="757"/>
        <end position="760"/>
    </location>
</feature>
<feature type="turn" evidence="13">
    <location>
        <begin position="765"/>
        <end position="767"/>
    </location>
</feature>
<feature type="helix" evidence="10">
    <location>
        <begin position="770"/>
        <end position="779"/>
    </location>
</feature>
<feature type="helix" evidence="10">
    <location>
        <begin position="784"/>
        <end position="787"/>
    </location>
</feature>
<feature type="helix" evidence="10">
    <location>
        <begin position="790"/>
        <end position="800"/>
    </location>
</feature>
<feature type="helix" evidence="10">
    <location>
        <begin position="803"/>
        <end position="814"/>
    </location>
</feature>
<feature type="helix" evidence="10">
    <location>
        <begin position="816"/>
        <end position="830"/>
    </location>
</feature>
<feature type="helix" evidence="10">
    <location>
        <begin position="834"/>
        <end position="844"/>
    </location>
</feature>
<feature type="helix" evidence="13">
    <location>
        <begin position="847"/>
        <end position="849"/>
    </location>
</feature>
<feature type="helix" evidence="10">
    <location>
        <begin position="850"/>
        <end position="871"/>
    </location>
</feature>
<feature type="turn" evidence="13">
    <location>
        <begin position="876"/>
        <end position="879"/>
    </location>
</feature>
<feature type="helix" evidence="10">
    <location>
        <begin position="884"/>
        <end position="908"/>
    </location>
</feature>
<feature type="strand" evidence="10">
    <location>
        <begin position="909"/>
        <end position="911"/>
    </location>
</feature>
<feature type="helix" evidence="10">
    <location>
        <begin position="935"/>
        <end position="938"/>
    </location>
</feature>
<feature type="strand" evidence="12">
    <location>
        <begin position="943"/>
        <end position="945"/>
    </location>
</feature>
<feature type="helix" evidence="10">
    <location>
        <begin position="948"/>
        <end position="963"/>
    </location>
</feature>
<gene>
    <name type="primary">PPC1</name>
    <name type="synonym">p107</name>
    <name type="ordered locus">At1g53310</name>
    <name type="ORF">F12M16.21</name>
</gene>